<proteinExistence type="evidence at transcript level"/>
<sequence length="728" mass="80818">MRSLKLILASASVVSATCPYMSGEMPNSQNGPLDRRHDTLSDPTDQFLSKFYIDDEQSVLTTDVGGPIEDQHSLKAGNRGPTLLEDFIFRQKIQHFDHERVPERAVHARGAGAHGVFTSYNNWSNITAASFLNAAGKQTPVFVRFSTVAGSRGSVDSARDIHGFATRLYTDEGNFDIVGNNVPVFFIQDAIQFPDLIHAVKPQPDSEIPQAATAHDTAWDFFSQQPSSLHALFWAMSGHGIPRSMRHVDGWGVHTFRLVTDEGNSTLVKFRWKTLQGRAGLVWEEAQALGGKNPDFHRQDLWDAIESGRYPEWELGFQLVNEADQSKFDFDLLDPTKIIPEELVPFTPIGKMVLNRNPKNYFAETEQIMFQPGHVVRGIDFTDDPLLQGRLYSYLDTQLNRHGGPNFEQLPINRPRIPFHNNNRDGAGQMFIPLNTAAYTPNSMSNGFPQQANRTHNRGFFTAPGRMVNGPLVRELSPSFNDVWSQPRLFYNSLTVFEKQFLVNAMRFENSHVRSETVRKNVIIQLNRVDNDLARRVALAIGVEPPSPDPTFYHNKTTVPIGTFGTNLLRLDGLKIALLTRDDGSFTIAEQLRAAFNSANNKVDIVLVGSSLDPQRGVNMTYSGADGSIFDAVIVVGGLLTSASTQYPRGRPLRIITDAYAYGKPVGAVGDGSNEALRDVLMAAGGDASNGLDQPGVYISNDVSEAYVRSVLDGLTAYRFLNRFPLDR</sequence>
<protein>
    <recommendedName>
        <fullName>Catalase B</fullName>
        <ecNumber>1.11.1.6</ecNumber>
    </recommendedName>
</protein>
<name>CATB_AJECA</name>
<comment type="function">
    <text>Occurs in almost all aerobically respiring organisms and serves to protect cells from the toxic effects of hydrogen peroxide.</text>
</comment>
<comment type="catalytic activity">
    <reaction evidence="2">
        <text>2 H2O2 = O2 + 2 H2O</text>
        <dbReference type="Rhea" id="RHEA:20309"/>
        <dbReference type="ChEBI" id="CHEBI:15377"/>
        <dbReference type="ChEBI" id="CHEBI:15379"/>
        <dbReference type="ChEBI" id="CHEBI:16240"/>
        <dbReference type="EC" id="1.11.1.6"/>
    </reaction>
</comment>
<comment type="cofactor">
    <cofactor>
        <name>heme</name>
        <dbReference type="ChEBI" id="CHEBI:30413"/>
    </cofactor>
</comment>
<comment type="subcellular location">
    <subcellularLocation>
        <location>Secreted</location>
    </subcellularLocation>
</comment>
<comment type="similarity">
    <text evidence="3">Belongs to the catalase family.</text>
</comment>
<feature type="chain" id="PRO_0000084914" description="Catalase B">
    <location>
        <begin position="1"/>
        <end position="728"/>
    </location>
</feature>
<feature type="active site" evidence="2">
    <location>
        <position position="107"/>
    </location>
</feature>
<feature type="active site" evidence="2">
    <location>
        <position position="180"/>
    </location>
</feature>
<feature type="binding site" description="axial binding residue" evidence="1">
    <location>
        <position position="394"/>
    </location>
    <ligand>
        <name>heme</name>
        <dbReference type="ChEBI" id="CHEBI:30413"/>
    </ligand>
    <ligandPart>
        <name>Fe</name>
        <dbReference type="ChEBI" id="CHEBI:18248"/>
    </ligandPart>
</feature>
<dbReference type="EC" id="1.11.1.6"/>
<dbReference type="EMBL" id="AF139985">
    <property type="protein sequence ID" value="AAD33062.1"/>
    <property type="molecule type" value="mRNA"/>
</dbReference>
<dbReference type="EMBL" id="AY103480">
    <property type="protein sequence ID" value="AAM53417.1"/>
    <property type="molecule type" value="Genomic_DNA"/>
</dbReference>
<dbReference type="SMR" id="Q9Y7C2"/>
<dbReference type="GO" id="GO:0005829">
    <property type="term" value="C:cytosol"/>
    <property type="evidence" value="ECO:0007669"/>
    <property type="project" value="TreeGrafter"/>
</dbReference>
<dbReference type="GO" id="GO:0005576">
    <property type="term" value="C:extracellular region"/>
    <property type="evidence" value="ECO:0007669"/>
    <property type="project" value="UniProtKB-SubCell"/>
</dbReference>
<dbReference type="GO" id="GO:0004096">
    <property type="term" value="F:catalase activity"/>
    <property type="evidence" value="ECO:0007669"/>
    <property type="project" value="UniProtKB-EC"/>
</dbReference>
<dbReference type="GO" id="GO:0020037">
    <property type="term" value="F:heme binding"/>
    <property type="evidence" value="ECO:0007669"/>
    <property type="project" value="InterPro"/>
</dbReference>
<dbReference type="GO" id="GO:0046872">
    <property type="term" value="F:metal ion binding"/>
    <property type="evidence" value="ECO:0007669"/>
    <property type="project" value="UniProtKB-KW"/>
</dbReference>
<dbReference type="GO" id="GO:0042744">
    <property type="term" value="P:hydrogen peroxide catabolic process"/>
    <property type="evidence" value="ECO:0007669"/>
    <property type="project" value="UniProtKB-KW"/>
</dbReference>
<dbReference type="GO" id="GO:0006979">
    <property type="term" value="P:response to oxidative stress"/>
    <property type="evidence" value="ECO:0007669"/>
    <property type="project" value="InterPro"/>
</dbReference>
<dbReference type="CDD" id="cd03132">
    <property type="entry name" value="GATase1_catalase"/>
    <property type="match status" value="1"/>
</dbReference>
<dbReference type="FunFam" id="2.40.180.10:FF:000003">
    <property type="entry name" value="Catalase"/>
    <property type="match status" value="1"/>
</dbReference>
<dbReference type="FunFam" id="1.20.1370.20:FF:000001">
    <property type="entry name" value="Catalase HPII"/>
    <property type="match status" value="1"/>
</dbReference>
<dbReference type="Gene3D" id="1.20.1370.20">
    <property type="match status" value="1"/>
</dbReference>
<dbReference type="Gene3D" id="3.40.50.880">
    <property type="match status" value="1"/>
</dbReference>
<dbReference type="Gene3D" id="2.40.180.10">
    <property type="entry name" value="Catalase core domain"/>
    <property type="match status" value="1"/>
</dbReference>
<dbReference type="InterPro" id="IPR018028">
    <property type="entry name" value="Catalase"/>
</dbReference>
<dbReference type="InterPro" id="IPR024708">
    <property type="entry name" value="Catalase_AS"/>
</dbReference>
<dbReference type="InterPro" id="IPR024712">
    <property type="entry name" value="Catalase_clade2"/>
</dbReference>
<dbReference type="InterPro" id="IPR043156">
    <property type="entry name" value="Catalase_clade2_helical"/>
</dbReference>
<dbReference type="InterPro" id="IPR011614">
    <property type="entry name" value="Catalase_core"/>
</dbReference>
<dbReference type="InterPro" id="IPR010582">
    <property type="entry name" value="Catalase_immune_responsive"/>
</dbReference>
<dbReference type="InterPro" id="IPR041399">
    <property type="entry name" value="Catalase_large_C"/>
</dbReference>
<dbReference type="InterPro" id="IPR020835">
    <property type="entry name" value="Catalase_sf"/>
</dbReference>
<dbReference type="InterPro" id="IPR029062">
    <property type="entry name" value="Class_I_gatase-like"/>
</dbReference>
<dbReference type="PANTHER" id="PTHR42821">
    <property type="entry name" value="CATALASE"/>
    <property type="match status" value="1"/>
</dbReference>
<dbReference type="PANTHER" id="PTHR42821:SF3">
    <property type="entry name" value="CATALASE B"/>
    <property type="match status" value="1"/>
</dbReference>
<dbReference type="Pfam" id="PF00199">
    <property type="entry name" value="Catalase"/>
    <property type="match status" value="1"/>
</dbReference>
<dbReference type="Pfam" id="PF06628">
    <property type="entry name" value="Catalase-rel"/>
    <property type="match status" value="1"/>
</dbReference>
<dbReference type="Pfam" id="PF18011">
    <property type="entry name" value="Catalase_C"/>
    <property type="match status" value="1"/>
</dbReference>
<dbReference type="PIRSF" id="PIRSF038927">
    <property type="entry name" value="Catalase_clade2"/>
    <property type="match status" value="1"/>
</dbReference>
<dbReference type="PRINTS" id="PR00067">
    <property type="entry name" value="CATALASE"/>
</dbReference>
<dbReference type="SMART" id="SM01060">
    <property type="entry name" value="Catalase"/>
    <property type="match status" value="1"/>
</dbReference>
<dbReference type="SUPFAM" id="SSF52317">
    <property type="entry name" value="Class I glutamine amidotransferase-like"/>
    <property type="match status" value="1"/>
</dbReference>
<dbReference type="SUPFAM" id="SSF56634">
    <property type="entry name" value="Heme-dependent catalase-like"/>
    <property type="match status" value="1"/>
</dbReference>
<dbReference type="PROSITE" id="PS00438">
    <property type="entry name" value="CATALASE_2"/>
    <property type="match status" value="1"/>
</dbReference>
<dbReference type="PROSITE" id="PS51402">
    <property type="entry name" value="CATALASE_3"/>
    <property type="match status" value="1"/>
</dbReference>
<gene>
    <name type="primary">CATB</name>
</gene>
<keyword id="KW-0349">Heme</keyword>
<keyword id="KW-0376">Hydrogen peroxide</keyword>
<keyword id="KW-0408">Iron</keyword>
<keyword id="KW-0479">Metal-binding</keyword>
<keyword id="KW-0560">Oxidoreductase</keyword>
<keyword id="KW-0575">Peroxidase</keyword>
<keyword id="KW-0964">Secreted</keyword>
<reference key="1">
    <citation type="journal article" date="2002" name="Microbiology">
        <title>Redundancy, phylogeny and differential expression of Histoplasma capsulatum catalases.</title>
        <authorList>
            <person name="Johnson C.H."/>
            <person name="Klotz M.G."/>
            <person name="York J.L."/>
            <person name="Kruft V."/>
            <person name="McEwen J.E."/>
        </authorList>
    </citation>
    <scope>NUCLEOTIDE SEQUENCE [MRNA]</scope>
    <source>
        <strain>ATCC 26032 / G217B</strain>
    </source>
</reference>
<reference key="2">
    <citation type="submission" date="2002-05" db="EMBL/GenBank/DDBJ databases">
        <title>Characterization of the Histoplasma capsulatum gene for the externally located catalase B enzyme.</title>
        <authorList>
            <person name="Johnson C.H."/>
            <person name="McEwen J.E."/>
        </authorList>
    </citation>
    <scope>NUCLEOTIDE SEQUENCE</scope>
    <source>
        <strain>ATCC 26032 / G217B</strain>
    </source>
</reference>
<accession>Q9Y7C2</accession>
<evidence type="ECO:0000250" key="1"/>
<evidence type="ECO:0000255" key="2">
    <source>
        <dbReference type="PROSITE-ProRule" id="PRU10013"/>
    </source>
</evidence>
<evidence type="ECO:0000305" key="3"/>
<organism>
    <name type="scientific">Ajellomyces capsulatus</name>
    <name type="common">Darling's disease fungus</name>
    <name type="synonym">Histoplasma capsulatum</name>
    <dbReference type="NCBI Taxonomy" id="5037"/>
    <lineage>
        <taxon>Eukaryota</taxon>
        <taxon>Fungi</taxon>
        <taxon>Dikarya</taxon>
        <taxon>Ascomycota</taxon>
        <taxon>Pezizomycotina</taxon>
        <taxon>Eurotiomycetes</taxon>
        <taxon>Eurotiomycetidae</taxon>
        <taxon>Onygenales</taxon>
        <taxon>Ajellomycetaceae</taxon>
        <taxon>Histoplasma</taxon>
    </lineage>
</organism>